<feature type="chain" id="PRO_0000295947" description="Small ribosomal subunit protein uS12">
    <location>
        <begin position="1"/>
        <end position="124"/>
    </location>
</feature>
<feature type="modified residue" description="3-methylthioaspartic acid" evidence="1">
    <location>
        <position position="89"/>
    </location>
</feature>
<dbReference type="EMBL" id="CP000462">
    <property type="protein sequence ID" value="ABK35894.1"/>
    <property type="molecule type" value="Genomic_DNA"/>
</dbReference>
<dbReference type="RefSeq" id="WP_005306278.1">
    <property type="nucleotide sequence ID" value="NC_008570.1"/>
</dbReference>
<dbReference type="RefSeq" id="YP_858449.1">
    <property type="nucleotide sequence ID" value="NC_008570.1"/>
</dbReference>
<dbReference type="SMR" id="A0KQ98"/>
<dbReference type="STRING" id="380703.AHA_4021"/>
<dbReference type="EnsemblBacteria" id="ABK35894">
    <property type="protein sequence ID" value="ABK35894"/>
    <property type="gene ID" value="AHA_4021"/>
</dbReference>
<dbReference type="GeneID" id="92725349"/>
<dbReference type="KEGG" id="aha:AHA_4021"/>
<dbReference type="PATRIC" id="fig|380703.7.peg.3981"/>
<dbReference type="eggNOG" id="COG0048">
    <property type="taxonomic scope" value="Bacteria"/>
</dbReference>
<dbReference type="HOGENOM" id="CLU_104295_1_2_6"/>
<dbReference type="OrthoDB" id="9802366at2"/>
<dbReference type="PRO" id="PR:A0KQ98"/>
<dbReference type="Proteomes" id="UP000000756">
    <property type="component" value="Chromosome"/>
</dbReference>
<dbReference type="GO" id="GO:0015935">
    <property type="term" value="C:small ribosomal subunit"/>
    <property type="evidence" value="ECO:0007669"/>
    <property type="project" value="InterPro"/>
</dbReference>
<dbReference type="GO" id="GO:0019843">
    <property type="term" value="F:rRNA binding"/>
    <property type="evidence" value="ECO:0007669"/>
    <property type="project" value="UniProtKB-UniRule"/>
</dbReference>
<dbReference type="GO" id="GO:0003735">
    <property type="term" value="F:structural constituent of ribosome"/>
    <property type="evidence" value="ECO:0007669"/>
    <property type="project" value="InterPro"/>
</dbReference>
<dbReference type="GO" id="GO:0000049">
    <property type="term" value="F:tRNA binding"/>
    <property type="evidence" value="ECO:0007669"/>
    <property type="project" value="UniProtKB-UniRule"/>
</dbReference>
<dbReference type="GO" id="GO:0006412">
    <property type="term" value="P:translation"/>
    <property type="evidence" value="ECO:0007669"/>
    <property type="project" value="UniProtKB-UniRule"/>
</dbReference>
<dbReference type="CDD" id="cd03368">
    <property type="entry name" value="Ribosomal_S12"/>
    <property type="match status" value="1"/>
</dbReference>
<dbReference type="FunFam" id="2.40.50.140:FF:000001">
    <property type="entry name" value="30S ribosomal protein S12"/>
    <property type="match status" value="1"/>
</dbReference>
<dbReference type="Gene3D" id="2.40.50.140">
    <property type="entry name" value="Nucleic acid-binding proteins"/>
    <property type="match status" value="1"/>
</dbReference>
<dbReference type="HAMAP" id="MF_00403_B">
    <property type="entry name" value="Ribosomal_uS12_B"/>
    <property type="match status" value="1"/>
</dbReference>
<dbReference type="InterPro" id="IPR012340">
    <property type="entry name" value="NA-bd_OB-fold"/>
</dbReference>
<dbReference type="InterPro" id="IPR006032">
    <property type="entry name" value="Ribosomal_uS12"/>
</dbReference>
<dbReference type="InterPro" id="IPR005679">
    <property type="entry name" value="Ribosomal_uS12_bac"/>
</dbReference>
<dbReference type="NCBIfam" id="TIGR00981">
    <property type="entry name" value="rpsL_bact"/>
    <property type="match status" value="1"/>
</dbReference>
<dbReference type="PANTHER" id="PTHR11652">
    <property type="entry name" value="30S RIBOSOMAL PROTEIN S12 FAMILY MEMBER"/>
    <property type="match status" value="1"/>
</dbReference>
<dbReference type="Pfam" id="PF00164">
    <property type="entry name" value="Ribosom_S12_S23"/>
    <property type="match status" value="1"/>
</dbReference>
<dbReference type="PIRSF" id="PIRSF002133">
    <property type="entry name" value="Ribosomal_S12/S23"/>
    <property type="match status" value="1"/>
</dbReference>
<dbReference type="PRINTS" id="PR01034">
    <property type="entry name" value="RIBOSOMALS12"/>
</dbReference>
<dbReference type="SUPFAM" id="SSF50249">
    <property type="entry name" value="Nucleic acid-binding proteins"/>
    <property type="match status" value="1"/>
</dbReference>
<dbReference type="PROSITE" id="PS00055">
    <property type="entry name" value="RIBOSOMAL_S12"/>
    <property type="match status" value="1"/>
</dbReference>
<comment type="function">
    <text evidence="2">With S4 and S5 plays an important role in translational accuracy.</text>
</comment>
<comment type="function">
    <text evidence="2">Interacts with and stabilizes bases of the 16S rRNA that are involved in tRNA selection in the A site and with the mRNA backbone. Located at the interface of the 30S and 50S subunits, it traverses the body of the 30S subunit contacting proteins on the other side and probably holding the rRNA structure together. The combined cluster of proteins S8, S12 and S17 appears to hold together the shoulder and platform of the 30S subunit.</text>
</comment>
<comment type="subunit">
    <text evidence="2">Part of the 30S ribosomal subunit. Contacts proteins S8 and S17. May interact with IF1 in the 30S initiation complex.</text>
</comment>
<comment type="similarity">
    <text evidence="2">Belongs to the universal ribosomal protein uS12 family.</text>
</comment>
<sequence length="124" mass="13748">MATINQLVRKPRIKLVVKSNVPALEACPQKRGVCTRVYTTTPKKPNSALRKVCRVRLTNGFEVTSYIGGEGHNLQEHSVVLIRGGRVKDLPGVRYHTVRGALDCAGVKDRKQARSKYGVKRPKA</sequence>
<evidence type="ECO:0000250" key="1"/>
<evidence type="ECO:0000255" key="2">
    <source>
        <dbReference type="HAMAP-Rule" id="MF_00403"/>
    </source>
</evidence>
<evidence type="ECO:0000305" key="3"/>
<reference key="1">
    <citation type="journal article" date="2006" name="J. Bacteriol.">
        <title>Genome sequence of Aeromonas hydrophila ATCC 7966T: jack of all trades.</title>
        <authorList>
            <person name="Seshadri R."/>
            <person name="Joseph S.W."/>
            <person name="Chopra A.K."/>
            <person name="Sha J."/>
            <person name="Shaw J."/>
            <person name="Graf J."/>
            <person name="Haft D.H."/>
            <person name="Wu M."/>
            <person name="Ren Q."/>
            <person name="Rosovitz M.J."/>
            <person name="Madupu R."/>
            <person name="Tallon L."/>
            <person name="Kim M."/>
            <person name="Jin S."/>
            <person name="Vuong H."/>
            <person name="Stine O.C."/>
            <person name="Ali A."/>
            <person name="Horneman A.J."/>
            <person name="Heidelberg J.F."/>
        </authorList>
    </citation>
    <scope>NUCLEOTIDE SEQUENCE [LARGE SCALE GENOMIC DNA]</scope>
    <source>
        <strain>ATCC 7966 / DSM 30187 / BCRC 13018 / CCUG 14551 / JCM 1027 / KCTC 2358 / NCIMB 9240 / NCTC 8049</strain>
    </source>
</reference>
<proteinExistence type="inferred from homology"/>
<keyword id="KW-0488">Methylation</keyword>
<keyword id="KW-1185">Reference proteome</keyword>
<keyword id="KW-0687">Ribonucleoprotein</keyword>
<keyword id="KW-0689">Ribosomal protein</keyword>
<keyword id="KW-0694">RNA-binding</keyword>
<keyword id="KW-0699">rRNA-binding</keyword>
<keyword id="KW-0820">tRNA-binding</keyword>
<protein>
    <recommendedName>
        <fullName evidence="2">Small ribosomal subunit protein uS12</fullName>
    </recommendedName>
    <alternativeName>
        <fullName evidence="3">30S ribosomal protein S12</fullName>
    </alternativeName>
</protein>
<accession>A0KQ98</accession>
<organism>
    <name type="scientific">Aeromonas hydrophila subsp. hydrophila (strain ATCC 7966 / DSM 30187 / BCRC 13018 / CCUG 14551 / JCM 1027 / KCTC 2358 / NCIMB 9240 / NCTC 8049)</name>
    <dbReference type="NCBI Taxonomy" id="380703"/>
    <lineage>
        <taxon>Bacteria</taxon>
        <taxon>Pseudomonadati</taxon>
        <taxon>Pseudomonadota</taxon>
        <taxon>Gammaproteobacteria</taxon>
        <taxon>Aeromonadales</taxon>
        <taxon>Aeromonadaceae</taxon>
        <taxon>Aeromonas</taxon>
    </lineage>
</organism>
<name>RS12_AERHH</name>
<gene>
    <name evidence="2" type="primary">rpsL</name>
    <name type="ordered locus">AHA_4021</name>
</gene>